<name>NAGZ_SHESR</name>
<dbReference type="EC" id="3.2.1.52" evidence="1"/>
<dbReference type="EMBL" id="CP000444">
    <property type="protein sequence ID" value="ABI42797.1"/>
    <property type="molecule type" value="Genomic_DNA"/>
</dbReference>
<dbReference type="SMR" id="Q0HVQ8"/>
<dbReference type="CAZy" id="GH3">
    <property type="family name" value="Glycoside Hydrolase Family 3"/>
</dbReference>
<dbReference type="KEGG" id="shm:Shewmr7_1805"/>
<dbReference type="HOGENOM" id="CLU_008392_0_0_6"/>
<dbReference type="UniPathway" id="UPA00544"/>
<dbReference type="GO" id="GO:0005737">
    <property type="term" value="C:cytoplasm"/>
    <property type="evidence" value="ECO:0007669"/>
    <property type="project" value="UniProtKB-SubCell"/>
</dbReference>
<dbReference type="GO" id="GO:0004563">
    <property type="term" value="F:beta-N-acetylhexosaminidase activity"/>
    <property type="evidence" value="ECO:0007669"/>
    <property type="project" value="UniProtKB-UniRule"/>
</dbReference>
<dbReference type="GO" id="GO:0005975">
    <property type="term" value="P:carbohydrate metabolic process"/>
    <property type="evidence" value="ECO:0007669"/>
    <property type="project" value="InterPro"/>
</dbReference>
<dbReference type="GO" id="GO:0051301">
    <property type="term" value="P:cell division"/>
    <property type="evidence" value="ECO:0007669"/>
    <property type="project" value="UniProtKB-KW"/>
</dbReference>
<dbReference type="GO" id="GO:0071555">
    <property type="term" value="P:cell wall organization"/>
    <property type="evidence" value="ECO:0007669"/>
    <property type="project" value="UniProtKB-KW"/>
</dbReference>
<dbReference type="GO" id="GO:0009252">
    <property type="term" value="P:peptidoglycan biosynthetic process"/>
    <property type="evidence" value="ECO:0007669"/>
    <property type="project" value="UniProtKB-KW"/>
</dbReference>
<dbReference type="GO" id="GO:0009254">
    <property type="term" value="P:peptidoglycan turnover"/>
    <property type="evidence" value="ECO:0007669"/>
    <property type="project" value="UniProtKB-UniRule"/>
</dbReference>
<dbReference type="GO" id="GO:0008360">
    <property type="term" value="P:regulation of cell shape"/>
    <property type="evidence" value="ECO:0007669"/>
    <property type="project" value="UniProtKB-KW"/>
</dbReference>
<dbReference type="FunFam" id="3.20.20.300:FF:000001">
    <property type="entry name" value="Beta-hexosaminidase"/>
    <property type="match status" value="1"/>
</dbReference>
<dbReference type="Gene3D" id="3.20.20.300">
    <property type="entry name" value="Glycoside hydrolase, family 3, N-terminal domain"/>
    <property type="match status" value="1"/>
</dbReference>
<dbReference type="HAMAP" id="MF_00364">
    <property type="entry name" value="NagZ"/>
    <property type="match status" value="1"/>
</dbReference>
<dbReference type="InterPro" id="IPR022956">
    <property type="entry name" value="Beta_hexosaminidase_bac"/>
</dbReference>
<dbReference type="InterPro" id="IPR019800">
    <property type="entry name" value="Glyco_hydro_3_AS"/>
</dbReference>
<dbReference type="InterPro" id="IPR001764">
    <property type="entry name" value="Glyco_hydro_3_N"/>
</dbReference>
<dbReference type="InterPro" id="IPR036962">
    <property type="entry name" value="Glyco_hydro_3_N_sf"/>
</dbReference>
<dbReference type="InterPro" id="IPR017853">
    <property type="entry name" value="Glycoside_hydrolase_SF"/>
</dbReference>
<dbReference type="InterPro" id="IPR050226">
    <property type="entry name" value="NagZ_Beta-hexosaminidase"/>
</dbReference>
<dbReference type="NCBIfam" id="NF003740">
    <property type="entry name" value="PRK05337.1"/>
    <property type="match status" value="1"/>
</dbReference>
<dbReference type="PANTHER" id="PTHR30480:SF13">
    <property type="entry name" value="BETA-HEXOSAMINIDASE"/>
    <property type="match status" value="1"/>
</dbReference>
<dbReference type="PANTHER" id="PTHR30480">
    <property type="entry name" value="BETA-HEXOSAMINIDASE-RELATED"/>
    <property type="match status" value="1"/>
</dbReference>
<dbReference type="Pfam" id="PF00933">
    <property type="entry name" value="Glyco_hydro_3"/>
    <property type="match status" value="1"/>
</dbReference>
<dbReference type="SUPFAM" id="SSF51445">
    <property type="entry name" value="(Trans)glycosidases"/>
    <property type="match status" value="1"/>
</dbReference>
<dbReference type="PROSITE" id="PS00775">
    <property type="entry name" value="GLYCOSYL_HYDROL_F3"/>
    <property type="match status" value="1"/>
</dbReference>
<comment type="function">
    <text evidence="1">Plays a role in peptidoglycan recycling by cleaving the terminal beta-1,4-linked N-acetylglucosamine (GlcNAc) from peptide-linked peptidoglycan fragments, giving rise to free GlcNAc, anhydro-N-acetylmuramic acid and anhydro-N-acetylmuramic acid-linked peptides.</text>
</comment>
<comment type="catalytic activity">
    <reaction evidence="1">
        <text>Hydrolysis of terminal non-reducing N-acetyl-D-hexosamine residues in N-acetyl-beta-D-hexosaminides.</text>
        <dbReference type="EC" id="3.2.1.52"/>
    </reaction>
</comment>
<comment type="pathway">
    <text evidence="1">Cell wall biogenesis; peptidoglycan recycling.</text>
</comment>
<comment type="subcellular location">
    <subcellularLocation>
        <location evidence="1">Cytoplasm</location>
    </subcellularLocation>
</comment>
<comment type="similarity">
    <text evidence="1">Belongs to the glycosyl hydrolase 3 family. NagZ subfamily.</text>
</comment>
<feature type="chain" id="PRO_1000005664" description="Beta-hexosaminidase">
    <location>
        <begin position="1"/>
        <end position="342"/>
    </location>
</feature>
<feature type="active site" description="Proton donor/acceptor" evidence="1">
    <location>
        <position position="177"/>
    </location>
</feature>
<feature type="active site" description="Nucleophile" evidence="1">
    <location>
        <position position="249"/>
    </location>
</feature>
<feature type="binding site" evidence="1">
    <location>
        <position position="61"/>
    </location>
    <ligand>
        <name>substrate</name>
    </ligand>
</feature>
<feature type="binding site" evidence="1">
    <location>
        <position position="69"/>
    </location>
    <ligand>
        <name>substrate</name>
    </ligand>
</feature>
<feature type="binding site" evidence="1">
    <location>
        <position position="134"/>
    </location>
    <ligand>
        <name>substrate</name>
    </ligand>
</feature>
<feature type="binding site" evidence="1">
    <location>
        <begin position="164"/>
        <end position="165"/>
    </location>
    <ligand>
        <name>substrate</name>
    </ligand>
</feature>
<feature type="site" description="Important for catalytic activity" evidence="1">
    <location>
        <position position="175"/>
    </location>
</feature>
<organism>
    <name type="scientific">Shewanella sp. (strain MR-7)</name>
    <dbReference type="NCBI Taxonomy" id="60481"/>
    <lineage>
        <taxon>Bacteria</taxon>
        <taxon>Pseudomonadati</taxon>
        <taxon>Pseudomonadota</taxon>
        <taxon>Gammaproteobacteria</taxon>
        <taxon>Alteromonadales</taxon>
        <taxon>Shewanellaceae</taxon>
        <taxon>Shewanella</taxon>
    </lineage>
</organism>
<gene>
    <name evidence="1" type="primary">nagZ</name>
    <name type="ordered locus">Shewmr7_1805</name>
</gene>
<keyword id="KW-0131">Cell cycle</keyword>
<keyword id="KW-0132">Cell division</keyword>
<keyword id="KW-0133">Cell shape</keyword>
<keyword id="KW-0961">Cell wall biogenesis/degradation</keyword>
<keyword id="KW-0963">Cytoplasm</keyword>
<keyword id="KW-0326">Glycosidase</keyword>
<keyword id="KW-0378">Hydrolase</keyword>
<keyword id="KW-0573">Peptidoglycan synthesis</keyword>
<evidence type="ECO:0000255" key="1">
    <source>
        <dbReference type="HAMAP-Rule" id="MF_00364"/>
    </source>
</evidence>
<accession>Q0HVQ8</accession>
<reference key="1">
    <citation type="submission" date="2006-08" db="EMBL/GenBank/DDBJ databases">
        <title>Complete sequence of chromosome 1 of Shewanella sp. MR-7.</title>
        <authorList>
            <person name="Copeland A."/>
            <person name="Lucas S."/>
            <person name="Lapidus A."/>
            <person name="Barry K."/>
            <person name="Detter J.C."/>
            <person name="Glavina del Rio T."/>
            <person name="Hammon N."/>
            <person name="Israni S."/>
            <person name="Dalin E."/>
            <person name="Tice H."/>
            <person name="Pitluck S."/>
            <person name="Kiss H."/>
            <person name="Brettin T."/>
            <person name="Bruce D."/>
            <person name="Han C."/>
            <person name="Tapia R."/>
            <person name="Gilna P."/>
            <person name="Schmutz J."/>
            <person name="Larimer F."/>
            <person name="Land M."/>
            <person name="Hauser L."/>
            <person name="Kyrpides N."/>
            <person name="Mikhailova N."/>
            <person name="Nealson K."/>
            <person name="Konstantinidis K."/>
            <person name="Klappenbach J."/>
            <person name="Tiedje J."/>
            <person name="Richardson P."/>
        </authorList>
    </citation>
    <scope>NUCLEOTIDE SEQUENCE [LARGE SCALE GENOMIC DNA]</scope>
    <source>
        <strain>MR-7</strain>
    </source>
</reference>
<protein>
    <recommendedName>
        <fullName evidence="1">Beta-hexosaminidase</fullName>
        <ecNumber evidence="1">3.2.1.52</ecNumber>
    </recommendedName>
    <alternativeName>
        <fullName evidence="1">Beta-N-acetylhexosaminidase</fullName>
    </alternativeName>
    <alternativeName>
        <fullName evidence="1">N-acetyl-beta-glucosaminidase</fullName>
    </alternativeName>
</protein>
<sequence length="342" mass="37151">MSYLMLDLLSLDVSEAEAEMLRHPQVGGLILFSRNFSSREQLISLVQQIRQIRPEILIAVDHEGGRVQRFREGFTLIPAMGDILPAAKGDMLLAKRWACELGFLMAIELLACDIDLSFAPVLDLNGISQVIGKRSFSAKPDEVIALAQSFIEGMAEAGMGAVGKHFPGHGSVAADSHIAQAIDEREAEAIFNQDILPFKELIAKGKLSGIMPAHVIYPKVDPNPAGFSSYWLQQILRQELGFDGVIFSDDLGMKGASFAGDYLGRAQAALDAGCDMILVCNDNPGVMSLLNGFVWPDDAPQHPTSLLKPNVAQTAIALENSARWENAKQLAEQIQLAQQAKV</sequence>
<proteinExistence type="inferred from homology"/>